<reference key="1">
    <citation type="journal article" date="2005" name="PLoS Genet.">
        <title>Life in hot carbon monoxide: the complete genome sequence of Carboxydothermus hydrogenoformans Z-2901.</title>
        <authorList>
            <person name="Wu M."/>
            <person name="Ren Q."/>
            <person name="Durkin A.S."/>
            <person name="Daugherty S.C."/>
            <person name="Brinkac L.M."/>
            <person name="Dodson R.J."/>
            <person name="Madupu R."/>
            <person name="Sullivan S.A."/>
            <person name="Kolonay J.F."/>
            <person name="Nelson W.C."/>
            <person name="Tallon L.J."/>
            <person name="Jones K.M."/>
            <person name="Ulrich L.E."/>
            <person name="Gonzalez J.M."/>
            <person name="Zhulin I.B."/>
            <person name="Robb F.T."/>
            <person name="Eisen J.A."/>
        </authorList>
    </citation>
    <scope>NUCLEOTIDE SEQUENCE [LARGE SCALE GENOMIC DNA]</scope>
    <source>
        <strain>ATCC BAA-161 / DSM 6008 / Z-2901</strain>
    </source>
</reference>
<dbReference type="EC" id="6.3.1.5" evidence="1"/>
<dbReference type="EMBL" id="CP000141">
    <property type="protein sequence ID" value="ABB13788.1"/>
    <property type="molecule type" value="Genomic_DNA"/>
</dbReference>
<dbReference type="RefSeq" id="WP_011344433.1">
    <property type="nucleotide sequence ID" value="NC_007503.1"/>
</dbReference>
<dbReference type="SMR" id="Q3ABX6"/>
<dbReference type="FunCoup" id="Q3ABX6">
    <property type="interactions" value="95"/>
</dbReference>
<dbReference type="STRING" id="246194.CHY_1526"/>
<dbReference type="KEGG" id="chy:CHY_1526"/>
<dbReference type="eggNOG" id="COG0171">
    <property type="taxonomic scope" value="Bacteria"/>
</dbReference>
<dbReference type="HOGENOM" id="CLU_059327_1_1_9"/>
<dbReference type="InParanoid" id="Q3ABX6"/>
<dbReference type="OrthoDB" id="9803818at2"/>
<dbReference type="UniPathway" id="UPA00253">
    <property type="reaction ID" value="UER00333"/>
</dbReference>
<dbReference type="Proteomes" id="UP000002706">
    <property type="component" value="Chromosome"/>
</dbReference>
<dbReference type="GO" id="GO:0005737">
    <property type="term" value="C:cytoplasm"/>
    <property type="evidence" value="ECO:0007669"/>
    <property type="project" value="InterPro"/>
</dbReference>
<dbReference type="GO" id="GO:0005524">
    <property type="term" value="F:ATP binding"/>
    <property type="evidence" value="ECO:0007669"/>
    <property type="project" value="UniProtKB-UniRule"/>
</dbReference>
<dbReference type="GO" id="GO:0004359">
    <property type="term" value="F:glutaminase activity"/>
    <property type="evidence" value="ECO:0007669"/>
    <property type="project" value="InterPro"/>
</dbReference>
<dbReference type="GO" id="GO:0046872">
    <property type="term" value="F:metal ion binding"/>
    <property type="evidence" value="ECO:0007669"/>
    <property type="project" value="UniProtKB-KW"/>
</dbReference>
<dbReference type="GO" id="GO:0003952">
    <property type="term" value="F:NAD+ synthase (glutamine-hydrolyzing) activity"/>
    <property type="evidence" value="ECO:0007669"/>
    <property type="project" value="InterPro"/>
</dbReference>
<dbReference type="GO" id="GO:0008795">
    <property type="term" value="F:NAD+ synthase activity"/>
    <property type="evidence" value="ECO:0007669"/>
    <property type="project" value="UniProtKB-UniRule"/>
</dbReference>
<dbReference type="GO" id="GO:0009435">
    <property type="term" value="P:NAD biosynthetic process"/>
    <property type="evidence" value="ECO:0007669"/>
    <property type="project" value="UniProtKB-UniRule"/>
</dbReference>
<dbReference type="CDD" id="cd00553">
    <property type="entry name" value="NAD_synthase"/>
    <property type="match status" value="1"/>
</dbReference>
<dbReference type="Gene3D" id="3.40.50.620">
    <property type="entry name" value="HUPs"/>
    <property type="match status" value="1"/>
</dbReference>
<dbReference type="HAMAP" id="MF_00193">
    <property type="entry name" value="NadE_ammonia_dep"/>
    <property type="match status" value="1"/>
</dbReference>
<dbReference type="InterPro" id="IPR022310">
    <property type="entry name" value="NAD/GMP_synthase"/>
</dbReference>
<dbReference type="InterPro" id="IPR003694">
    <property type="entry name" value="NAD_synthase"/>
</dbReference>
<dbReference type="InterPro" id="IPR022926">
    <property type="entry name" value="NH(3)-dep_NAD(+)_synth"/>
</dbReference>
<dbReference type="InterPro" id="IPR014729">
    <property type="entry name" value="Rossmann-like_a/b/a_fold"/>
</dbReference>
<dbReference type="NCBIfam" id="TIGR00552">
    <property type="entry name" value="nadE"/>
    <property type="match status" value="1"/>
</dbReference>
<dbReference type="NCBIfam" id="NF010587">
    <property type="entry name" value="PRK13980.1"/>
    <property type="match status" value="1"/>
</dbReference>
<dbReference type="PANTHER" id="PTHR23090:SF9">
    <property type="entry name" value="GLUTAMINE-DEPENDENT NAD(+) SYNTHETASE"/>
    <property type="match status" value="1"/>
</dbReference>
<dbReference type="PANTHER" id="PTHR23090">
    <property type="entry name" value="NH 3 /GLUTAMINE-DEPENDENT NAD + SYNTHETASE"/>
    <property type="match status" value="1"/>
</dbReference>
<dbReference type="Pfam" id="PF02540">
    <property type="entry name" value="NAD_synthase"/>
    <property type="match status" value="1"/>
</dbReference>
<dbReference type="SUPFAM" id="SSF52402">
    <property type="entry name" value="Adenine nucleotide alpha hydrolases-like"/>
    <property type="match status" value="1"/>
</dbReference>
<keyword id="KW-0067">ATP-binding</keyword>
<keyword id="KW-0436">Ligase</keyword>
<keyword id="KW-0460">Magnesium</keyword>
<keyword id="KW-0479">Metal-binding</keyword>
<keyword id="KW-0520">NAD</keyword>
<keyword id="KW-0547">Nucleotide-binding</keyword>
<keyword id="KW-1185">Reference proteome</keyword>
<protein>
    <recommendedName>
        <fullName evidence="1">NH(3)-dependent NAD(+) synthetase</fullName>
        <ecNumber evidence="1">6.3.1.5</ecNumber>
    </recommendedName>
</protein>
<name>NADE_CARHZ</name>
<evidence type="ECO:0000255" key="1">
    <source>
        <dbReference type="HAMAP-Rule" id="MF_00193"/>
    </source>
</evidence>
<gene>
    <name evidence="1" type="primary">nadE</name>
    <name type="ordered locus">CHY_1526</name>
</gene>
<comment type="function">
    <text evidence="1">Catalyzes the ATP-dependent amidation of deamido-NAD to form NAD. Uses ammonia as a nitrogen source.</text>
</comment>
<comment type="catalytic activity">
    <reaction evidence="1">
        <text>deamido-NAD(+) + NH4(+) + ATP = AMP + diphosphate + NAD(+) + H(+)</text>
        <dbReference type="Rhea" id="RHEA:21188"/>
        <dbReference type="ChEBI" id="CHEBI:15378"/>
        <dbReference type="ChEBI" id="CHEBI:28938"/>
        <dbReference type="ChEBI" id="CHEBI:30616"/>
        <dbReference type="ChEBI" id="CHEBI:33019"/>
        <dbReference type="ChEBI" id="CHEBI:57540"/>
        <dbReference type="ChEBI" id="CHEBI:58437"/>
        <dbReference type="ChEBI" id="CHEBI:456215"/>
        <dbReference type="EC" id="6.3.1.5"/>
    </reaction>
</comment>
<comment type="pathway">
    <text evidence="1">Cofactor biosynthesis; NAD(+) biosynthesis; NAD(+) from deamido-NAD(+) (ammonia route): step 1/1.</text>
</comment>
<comment type="subunit">
    <text evidence="1">Homodimer.</text>
</comment>
<comment type="similarity">
    <text evidence="1">Belongs to the NAD synthetase family.</text>
</comment>
<feature type="chain" id="PRO_1000077544" description="NH(3)-dependent NAD(+) synthetase">
    <location>
        <begin position="1"/>
        <end position="243"/>
    </location>
</feature>
<feature type="binding site" evidence="1">
    <location>
        <begin position="31"/>
        <end position="38"/>
    </location>
    <ligand>
        <name>ATP</name>
        <dbReference type="ChEBI" id="CHEBI:30616"/>
    </ligand>
</feature>
<feature type="binding site" evidence="1">
    <location>
        <position position="37"/>
    </location>
    <ligand>
        <name>Mg(2+)</name>
        <dbReference type="ChEBI" id="CHEBI:18420"/>
    </ligand>
</feature>
<feature type="binding site" evidence="1">
    <location>
        <position position="116"/>
    </location>
    <ligand>
        <name>deamido-NAD(+)</name>
        <dbReference type="ChEBI" id="CHEBI:58437"/>
    </ligand>
</feature>
<feature type="binding site" evidence="1">
    <location>
        <position position="136"/>
    </location>
    <ligand>
        <name>ATP</name>
        <dbReference type="ChEBI" id="CHEBI:30616"/>
    </ligand>
</feature>
<feature type="binding site" evidence="1">
    <location>
        <position position="141"/>
    </location>
    <ligand>
        <name>Mg(2+)</name>
        <dbReference type="ChEBI" id="CHEBI:18420"/>
    </ligand>
</feature>
<feature type="binding site" evidence="1">
    <location>
        <position position="149"/>
    </location>
    <ligand>
        <name>deamido-NAD(+)</name>
        <dbReference type="ChEBI" id="CHEBI:58437"/>
    </ligand>
</feature>
<feature type="binding site" evidence="1">
    <location>
        <position position="156"/>
    </location>
    <ligand>
        <name>deamido-NAD(+)</name>
        <dbReference type="ChEBI" id="CHEBI:58437"/>
    </ligand>
</feature>
<feature type="binding site" evidence="1">
    <location>
        <position position="165"/>
    </location>
    <ligand>
        <name>ATP</name>
        <dbReference type="ChEBI" id="CHEBI:30616"/>
    </ligand>
</feature>
<feature type="binding site" evidence="1">
    <location>
        <position position="187"/>
    </location>
    <ligand>
        <name>ATP</name>
        <dbReference type="ChEBI" id="CHEBI:30616"/>
    </ligand>
</feature>
<feature type="binding site" evidence="1">
    <location>
        <begin position="233"/>
        <end position="234"/>
    </location>
    <ligand>
        <name>deamido-NAD(+)</name>
        <dbReference type="ChEBI" id="CHEBI:58437"/>
    </ligand>
</feature>
<sequence>MRVNWEEKTEKLVNWLREKTREANASGLLVGLSGGVDSAVVATLIKKAFPEKSLGIIMPCFSNPEDEEDARMIANHLNLKYIVVNLDEPYQALVSSLKNATPHEPEKLALANIKPRLRMTTLYYWAANLNYLVAGTGNRTELEIGYFTKWGDGGVDLLPIGNLTKTEVWEFARYLGLPEKIITKAPSAGLWEGQTDEGEMGFTYKDIDHYLLTGEGSAELVDFVKRMQRKSQHKKRIPEVPML</sequence>
<accession>Q3ABX6</accession>
<proteinExistence type="inferred from homology"/>
<organism>
    <name type="scientific">Carboxydothermus hydrogenoformans (strain ATCC BAA-161 / DSM 6008 / Z-2901)</name>
    <dbReference type="NCBI Taxonomy" id="246194"/>
    <lineage>
        <taxon>Bacteria</taxon>
        <taxon>Bacillati</taxon>
        <taxon>Bacillota</taxon>
        <taxon>Clostridia</taxon>
        <taxon>Thermoanaerobacterales</taxon>
        <taxon>Thermoanaerobacteraceae</taxon>
        <taxon>Carboxydothermus</taxon>
    </lineage>
</organism>